<dbReference type="EC" id="3.6.5.-" evidence="1"/>
<dbReference type="EMBL" id="CP000786">
    <property type="protein sequence ID" value="ABZ97882.1"/>
    <property type="molecule type" value="Genomic_DNA"/>
</dbReference>
<dbReference type="SMR" id="B0SRT7"/>
<dbReference type="STRING" id="456481.LEPBI_I1776"/>
<dbReference type="KEGG" id="lbi:LEPBI_I1776"/>
<dbReference type="HOGENOM" id="CLU_011747_2_0_12"/>
<dbReference type="OrthoDB" id="9807318at2"/>
<dbReference type="BioCyc" id="LBIF456481:LEPBI_RS08775-MONOMER"/>
<dbReference type="Proteomes" id="UP000001847">
    <property type="component" value="Chromosome I"/>
</dbReference>
<dbReference type="GO" id="GO:0005737">
    <property type="term" value="C:cytoplasm"/>
    <property type="evidence" value="ECO:0007669"/>
    <property type="project" value="UniProtKB-SubCell"/>
</dbReference>
<dbReference type="GO" id="GO:0005525">
    <property type="term" value="F:GTP binding"/>
    <property type="evidence" value="ECO:0007669"/>
    <property type="project" value="UniProtKB-UniRule"/>
</dbReference>
<dbReference type="GO" id="GO:0003924">
    <property type="term" value="F:GTPase activity"/>
    <property type="evidence" value="ECO:0007669"/>
    <property type="project" value="UniProtKB-UniRule"/>
</dbReference>
<dbReference type="GO" id="GO:0000287">
    <property type="term" value="F:magnesium ion binding"/>
    <property type="evidence" value="ECO:0007669"/>
    <property type="project" value="InterPro"/>
</dbReference>
<dbReference type="GO" id="GO:0042254">
    <property type="term" value="P:ribosome biogenesis"/>
    <property type="evidence" value="ECO:0007669"/>
    <property type="project" value="UniProtKB-UniRule"/>
</dbReference>
<dbReference type="CDD" id="cd01898">
    <property type="entry name" value="Obg"/>
    <property type="match status" value="1"/>
</dbReference>
<dbReference type="FunFam" id="2.70.210.12:FF:000001">
    <property type="entry name" value="GTPase Obg"/>
    <property type="match status" value="1"/>
</dbReference>
<dbReference type="Gene3D" id="2.70.210.12">
    <property type="entry name" value="GTP1/OBG domain"/>
    <property type="match status" value="1"/>
</dbReference>
<dbReference type="Gene3D" id="3.40.50.300">
    <property type="entry name" value="P-loop containing nucleotide triphosphate hydrolases"/>
    <property type="match status" value="1"/>
</dbReference>
<dbReference type="HAMAP" id="MF_01454">
    <property type="entry name" value="GTPase_Obg"/>
    <property type="match status" value="1"/>
</dbReference>
<dbReference type="InterPro" id="IPR031167">
    <property type="entry name" value="G_OBG"/>
</dbReference>
<dbReference type="InterPro" id="IPR006073">
    <property type="entry name" value="GTP-bd"/>
</dbReference>
<dbReference type="InterPro" id="IPR014100">
    <property type="entry name" value="GTP-bd_Obg/CgtA"/>
</dbReference>
<dbReference type="InterPro" id="IPR006074">
    <property type="entry name" value="GTP1-OBG_CS"/>
</dbReference>
<dbReference type="InterPro" id="IPR006169">
    <property type="entry name" value="GTP1_OBG_dom"/>
</dbReference>
<dbReference type="InterPro" id="IPR036726">
    <property type="entry name" value="GTP1_OBG_dom_sf"/>
</dbReference>
<dbReference type="InterPro" id="IPR045086">
    <property type="entry name" value="OBG_GTPase"/>
</dbReference>
<dbReference type="InterPro" id="IPR027417">
    <property type="entry name" value="P-loop_NTPase"/>
</dbReference>
<dbReference type="NCBIfam" id="TIGR02729">
    <property type="entry name" value="Obg_CgtA"/>
    <property type="match status" value="1"/>
</dbReference>
<dbReference type="NCBIfam" id="NF008956">
    <property type="entry name" value="PRK12299.1"/>
    <property type="match status" value="1"/>
</dbReference>
<dbReference type="PANTHER" id="PTHR11702">
    <property type="entry name" value="DEVELOPMENTALLY REGULATED GTP-BINDING PROTEIN-RELATED"/>
    <property type="match status" value="1"/>
</dbReference>
<dbReference type="PANTHER" id="PTHR11702:SF31">
    <property type="entry name" value="MITOCHONDRIAL RIBOSOME-ASSOCIATED GTPASE 2"/>
    <property type="match status" value="1"/>
</dbReference>
<dbReference type="Pfam" id="PF01018">
    <property type="entry name" value="GTP1_OBG"/>
    <property type="match status" value="1"/>
</dbReference>
<dbReference type="Pfam" id="PF01926">
    <property type="entry name" value="MMR_HSR1"/>
    <property type="match status" value="1"/>
</dbReference>
<dbReference type="PIRSF" id="PIRSF002401">
    <property type="entry name" value="GTP_bd_Obg/CgtA"/>
    <property type="match status" value="1"/>
</dbReference>
<dbReference type="PRINTS" id="PR00326">
    <property type="entry name" value="GTP1OBG"/>
</dbReference>
<dbReference type="SUPFAM" id="SSF82051">
    <property type="entry name" value="Obg GTP-binding protein N-terminal domain"/>
    <property type="match status" value="1"/>
</dbReference>
<dbReference type="SUPFAM" id="SSF52540">
    <property type="entry name" value="P-loop containing nucleoside triphosphate hydrolases"/>
    <property type="match status" value="1"/>
</dbReference>
<dbReference type="PROSITE" id="PS51710">
    <property type="entry name" value="G_OBG"/>
    <property type="match status" value="1"/>
</dbReference>
<dbReference type="PROSITE" id="PS00905">
    <property type="entry name" value="GTP1_OBG"/>
    <property type="match status" value="1"/>
</dbReference>
<dbReference type="PROSITE" id="PS51883">
    <property type="entry name" value="OBG"/>
    <property type="match status" value="1"/>
</dbReference>
<accession>B0SRT7</accession>
<feature type="chain" id="PRO_0000386014" description="GTPase Obg">
    <location>
        <begin position="1"/>
        <end position="341"/>
    </location>
</feature>
<feature type="domain" description="Obg" evidence="2">
    <location>
        <begin position="2"/>
        <end position="160"/>
    </location>
</feature>
<feature type="domain" description="OBG-type G" evidence="1">
    <location>
        <begin position="161"/>
        <end position="330"/>
    </location>
</feature>
<feature type="binding site" evidence="1">
    <location>
        <begin position="167"/>
        <end position="174"/>
    </location>
    <ligand>
        <name>GTP</name>
        <dbReference type="ChEBI" id="CHEBI:37565"/>
    </ligand>
</feature>
<feature type="binding site" evidence="1">
    <location>
        <position position="174"/>
    </location>
    <ligand>
        <name>Mg(2+)</name>
        <dbReference type="ChEBI" id="CHEBI:18420"/>
    </ligand>
</feature>
<feature type="binding site" evidence="1">
    <location>
        <begin position="192"/>
        <end position="196"/>
    </location>
    <ligand>
        <name>GTP</name>
        <dbReference type="ChEBI" id="CHEBI:37565"/>
    </ligand>
</feature>
<feature type="binding site" evidence="1">
    <location>
        <position position="194"/>
    </location>
    <ligand>
        <name>Mg(2+)</name>
        <dbReference type="ChEBI" id="CHEBI:18420"/>
    </ligand>
</feature>
<feature type="binding site" evidence="1">
    <location>
        <begin position="215"/>
        <end position="218"/>
    </location>
    <ligand>
        <name>GTP</name>
        <dbReference type="ChEBI" id="CHEBI:37565"/>
    </ligand>
</feature>
<feature type="binding site" evidence="1">
    <location>
        <begin position="282"/>
        <end position="285"/>
    </location>
    <ligand>
        <name>GTP</name>
        <dbReference type="ChEBI" id="CHEBI:37565"/>
    </ligand>
</feature>
<feature type="binding site" evidence="1">
    <location>
        <begin position="311"/>
        <end position="313"/>
    </location>
    <ligand>
        <name>GTP</name>
        <dbReference type="ChEBI" id="CHEBI:37565"/>
    </ligand>
</feature>
<gene>
    <name evidence="1" type="primary">obg</name>
    <name type="ordered locus">LEPBI_I1776</name>
</gene>
<organism>
    <name type="scientific">Leptospira biflexa serovar Patoc (strain Patoc 1 / ATCC 23582 / Paris)</name>
    <dbReference type="NCBI Taxonomy" id="456481"/>
    <lineage>
        <taxon>Bacteria</taxon>
        <taxon>Pseudomonadati</taxon>
        <taxon>Spirochaetota</taxon>
        <taxon>Spirochaetia</taxon>
        <taxon>Leptospirales</taxon>
        <taxon>Leptospiraceae</taxon>
        <taxon>Leptospira</taxon>
    </lineage>
</organism>
<name>OBG_LEPBP</name>
<keyword id="KW-0963">Cytoplasm</keyword>
<keyword id="KW-0342">GTP-binding</keyword>
<keyword id="KW-0378">Hydrolase</keyword>
<keyword id="KW-0460">Magnesium</keyword>
<keyword id="KW-0479">Metal-binding</keyword>
<keyword id="KW-0547">Nucleotide-binding</keyword>
<keyword id="KW-1185">Reference proteome</keyword>
<comment type="function">
    <text evidence="1">An essential GTPase which binds GTP, GDP and possibly (p)ppGpp with moderate affinity, with high nucleotide exchange rates and a fairly low GTP hydrolysis rate. Plays a role in control of the cell cycle, stress response, ribosome biogenesis and in those bacteria that undergo differentiation, in morphogenesis control.</text>
</comment>
<comment type="cofactor">
    <cofactor evidence="1">
        <name>Mg(2+)</name>
        <dbReference type="ChEBI" id="CHEBI:18420"/>
    </cofactor>
</comment>
<comment type="subunit">
    <text evidence="1">Monomer.</text>
</comment>
<comment type="subcellular location">
    <subcellularLocation>
        <location evidence="1">Cytoplasm</location>
    </subcellularLocation>
</comment>
<comment type="similarity">
    <text evidence="1">Belongs to the TRAFAC class OBG-HflX-like GTPase superfamily. OBG GTPase family.</text>
</comment>
<evidence type="ECO:0000255" key="1">
    <source>
        <dbReference type="HAMAP-Rule" id="MF_01454"/>
    </source>
</evidence>
<evidence type="ECO:0000255" key="2">
    <source>
        <dbReference type="PROSITE-ProRule" id="PRU01231"/>
    </source>
</evidence>
<proteinExistence type="inferred from homology"/>
<reference key="1">
    <citation type="journal article" date="2008" name="PLoS ONE">
        <title>Genome sequence of the saprophyte Leptospira biflexa provides insights into the evolution of Leptospira and the pathogenesis of leptospirosis.</title>
        <authorList>
            <person name="Picardeau M."/>
            <person name="Bulach D.M."/>
            <person name="Bouchier C."/>
            <person name="Zuerner R.L."/>
            <person name="Zidane N."/>
            <person name="Wilson P.J."/>
            <person name="Creno S."/>
            <person name="Kuczek E.S."/>
            <person name="Bommezzadri S."/>
            <person name="Davis J.C."/>
            <person name="McGrath A."/>
            <person name="Johnson M.J."/>
            <person name="Boursaux-Eude C."/>
            <person name="Seemann T."/>
            <person name="Rouy Z."/>
            <person name="Coppel R.L."/>
            <person name="Rood J.I."/>
            <person name="Lajus A."/>
            <person name="Davies J.K."/>
            <person name="Medigue C."/>
            <person name="Adler B."/>
        </authorList>
    </citation>
    <scope>NUCLEOTIDE SEQUENCE [LARGE SCALE GENOMIC DNA]</scope>
    <source>
        <strain>Patoc 1 / ATCC 23582 / Paris</strain>
    </source>
</reference>
<protein>
    <recommendedName>
        <fullName evidence="1">GTPase Obg</fullName>
        <ecNumber evidence="1">3.6.5.-</ecNumber>
    </recommendedName>
    <alternativeName>
        <fullName evidence="1">GTP-binding protein Obg</fullName>
    </alternativeName>
</protein>
<sequence length="341" mass="37498">MSGFIDEVPIQIRAGHGGAGSVHFHKEKFVEFGGPDGGDGGKGGDVIFLAEGRMMTLENYLPDRMYAAQDGEPGLGQNRNGKNGEDLILKVPVGTQIIDSVTMELIYDFNHDGESFTIATGGRGGKGNTFFKTSVQQAPRYSQPGEEGGAFSLILELKLLADIGIVGLPNAGKSTLLAKITHAHPKIAGYAFTTLSPNLGVVHRHEDLFRYTVADIPGIIEGASRGVGLGISFLKHIERVQGILFLFDGGNLQLEEELEMLRSELGNYNQTLLDKKFLLVINKMDIWDNDPSFTEEIQKKYSHLGEIICISADKEFNLEYLLERIDKVFFTEKVKLVYENT</sequence>